<gene>
    <name type="primary">HVA22C</name>
    <name type="ordered locus">At1g69700</name>
    <name type="ORF">T6C23.10</name>
</gene>
<protein>
    <recommendedName>
        <fullName>HVA22-like protein c</fullName>
        <shortName>AtHVA22c</shortName>
    </recommendedName>
</protein>
<comment type="subcellular location">
    <subcellularLocation>
        <location evidence="3">Membrane</location>
        <topology evidence="3">Multi-pass membrane protein</topology>
    </subcellularLocation>
</comment>
<comment type="tissue specificity">
    <text evidence="2">Predominantly expressed in flower buds and stem.</text>
</comment>
<comment type="similarity">
    <text evidence="3">Belongs to the DP1 family.</text>
</comment>
<name>HA22C_ARATH</name>
<accession>Q9S784</accession>
<proteinExistence type="evidence at transcript level"/>
<feature type="chain" id="PRO_0000101837" description="HVA22-like protein c">
    <location>
        <begin position="1"/>
        <end position="184"/>
    </location>
</feature>
<feature type="transmembrane region" description="Helical" evidence="1">
    <location>
        <begin position="13"/>
        <end position="33"/>
    </location>
</feature>
<feature type="transmembrane region" description="Helical" evidence="1">
    <location>
        <begin position="51"/>
        <end position="71"/>
    </location>
</feature>
<feature type="transmembrane region" description="Helical" evidence="1">
    <location>
        <begin position="73"/>
        <end position="93"/>
    </location>
</feature>
<reference key="1">
    <citation type="journal article" date="2002" name="Plant Mol. Biol.">
        <title>AtHVA22 gene family in Arabidopsis: phylogenetic relationship, ABA and stress regulation, and tissue-specific expression.</title>
        <authorList>
            <person name="Chen C.-N."/>
            <person name="Chu C.-C."/>
            <person name="Zentella R."/>
            <person name="Pan S.-M."/>
            <person name="Ho T.-H.D."/>
        </authorList>
    </citation>
    <scope>NUCLEOTIDE SEQUENCE [GENOMIC DNA / MRNA]</scope>
    <scope>TISSUE SPECIFICITY</scope>
    <source>
        <strain>cv. Columbia</strain>
    </source>
</reference>
<reference key="2">
    <citation type="journal article" date="2000" name="Nature">
        <title>Sequence and analysis of chromosome 1 of the plant Arabidopsis thaliana.</title>
        <authorList>
            <person name="Theologis A."/>
            <person name="Ecker J.R."/>
            <person name="Palm C.J."/>
            <person name="Federspiel N.A."/>
            <person name="Kaul S."/>
            <person name="White O."/>
            <person name="Alonso J."/>
            <person name="Altafi H."/>
            <person name="Araujo R."/>
            <person name="Bowman C.L."/>
            <person name="Brooks S.Y."/>
            <person name="Buehler E."/>
            <person name="Chan A."/>
            <person name="Chao Q."/>
            <person name="Chen H."/>
            <person name="Cheuk R.F."/>
            <person name="Chin C.W."/>
            <person name="Chung M.K."/>
            <person name="Conn L."/>
            <person name="Conway A.B."/>
            <person name="Conway A.R."/>
            <person name="Creasy T.H."/>
            <person name="Dewar K."/>
            <person name="Dunn P."/>
            <person name="Etgu P."/>
            <person name="Feldblyum T.V."/>
            <person name="Feng J.-D."/>
            <person name="Fong B."/>
            <person name="Fujii C.Y."/>
            <person name="Gill J.E."/>
            <person name="Goldsmith A.D."/>
            <person name="Haas B."/>
            <person name="Hansen N.F."/>
            <person name="Hughes B."/>
            <person name="Huizar L."/>
            <person name="Hunter J.L."/>
            <person name="Jenkins J."/>
            <person name="Johnson-Hopson C."/>
            <person name="Khan S."/>
            <person name="Khaykin E."/>
            <person name="Kim C.J."/>
            <person name="Koo H.L."/>
            <person name="Kremenetskaia I."/>
            <person name="Kurtz D.B."/>
            <person name="Kwan A."/>
            <person name="Lam B."/>
            <person name="Langin-Hooper S."/>
            <person name="Lee A."/>
            <person name="Lee J.M."/>
            <person name="Lenz C.A."/>
            <person name="Li J.H."/>
            <person name="Li Y.-P."/>
            <person name="Lin X."/>
            <person name="Liu S.X."/>
            <person name="Liu Z.A."/>
            <person name="Luros J.S."/>
            <person name="Maiti R."/>
            <person name="Marziali A."/>
            <person name="Militscher J."/>
            <person name="Miranda M."/>
            <person name="Nguyen M."/>
            <person name="Nierman W.C."/>
            <person name="Osborne B.I."/>
            <person name="Pai G."/>
            <person name="Peterson J."/>
            <person name="Pham P.K."/>
            <person name="Rizzo M."/>
            <person name="Rooney T."/>
            <person name="Rowley D."/>
            <person name="Sakano H."/>
            <person name="Salzberg S.L."/>
            <person name="Schwartz J.R."/>
            <person name="Shinn P."/>
            <person name="Southwick A.M."/>
            <person name="Sun H."/>
            <person name="Tallon L.J."/>
            <person name="Tambunga G."/>
            <person name="Toriumi M.J."/>
            <person name="Town C.D."/>
            <person name="Utterback T."/>
            <person name="Van Aken S."/>
            <person name="Vaysberg M."/>
            <person name="Vysotskaia V.S."/>
            <person name="Walker M."/>
            <person name="Wu D."/>
            <person name="Yu G."/>
            <person name="Fraser C.M."/>
            <person name="Venter J.C."/>
            <person name="Davis R.W."/>
        </authorList>
    </citation>
    <scope>NUCLEOTIDE SEQUENCE [LARGE SCALE GENOMIC DNA]</scope>
    <source>
        <strain>cv. Columbia</strain>
    </source>
</reference>
<reference key="3">
    <citation type="journal article" date="2017" name="Plant J.">
        <title>Araport11: a complete reannotation of the Arabidopsis thaliana reference genome.</title>
        <authorList>
            <person name="Cheng C.Y."/>
            <person name="Krishnakumar V."/>
            <person name="Chan A.P."/>
            <person name="Thibaud-Nissen F."/>
            <person name="Schobel S."/>
            <person name="Town C.D."/>
        </authorList>
    </citation>
    <scope>GENOME REANNOTATION</scope>
    <source>
        <strain>cv. Columbia</strain>
    </source>
</reference>
<reference key="4">
    <citation type="journal article" date="2003" name="Science">
        <title>Empirical analysis of transcriptional activity in the Arabidopsis genome.</title>
        <authorList>
            <person name="Yamada K."/>
            <person name="Lim J."/>
            <person name="Dale J.M."/>
            <person name="Chen H."/>
            <person name="Shinn P."/>
            <person name="Palm C.J."/>
            <person name="Southwick A.M."/>
            <person name="Wu H.C."/>
            <person name="Kim C.J."/>
            <person name="Nguyen M."/>
            <person name="Pham P.K."/>
            <person name="Cheuk R.F."/>
            <person name="Karlin-Newmann G."/>
            <person name="Liu S.X."/>
            <person name="Lam B."/>
            <person name="Sakano H."/>
            <person name="Wu T."/>
            <person name="Yu G."/>
            <person name="Miranda M."/>
            <person name="Quach H.L."/>
            <person name="Tripp M."/>
            <person name="Chang C.H."/>
            <person name="Lee J.M."/>
            <person name="Toriumi M.J."/>
            <person name="Chan M.M."/>
            <person name="Tang C.C."/>
            <person name="Onodera C.S."/>
            <person name="Deng J.M."/>
            <person name="Akiyama K."/>
            <person name="Ansari Y."/>
            <person name="Arakawa T."/>
            <person name="Banh J."/>
            <person name="Banno F."/>
            <person name="Bowser L."/>
            <person name="Brooks S.Y."/>
            <person name="Carninci P."/>
            <person name="Chao Q."/>
            <person name="Choy N."/>
            <person name="Enju A."/>
            <person name="Goldsmith A.D."/>
            <person name="Gurjal M."/>
            <person name="Hansen N.F."/>
            <person name="Hayashizaki Y."/>
            <person name="Johnson-Hopson C."/>
            <person name="Hsuan V.W."/>
            <person name="Iida K."/>
            <person name="Karnes M."/>
            <person name="Khan S."/>
            <person name="Koesema E."/>
            <person name="Ishida J."/>
            <person name="Jiang P.X."/>
            <person name="Jones T."/>
            <person name="Kawai J."/>
            <person name="Kamiya A."/>
            <person name="Meyers C."/>
            <person name="Nakajima M."/>
            <person name="Narusaka M."/>
            <person name="Seki M."/>
            <person name="Sakurai T."/>
            <person name="Satou M."/>
            <person name="Tamse R."/>
            <person name="Vaysberg M."/>
            <person name="Wallender E.K."/>
            <person name="Wong C."/>
            <person name="Yamamura Y."/>
            <person name="Yuan S."/>
            <person name="Shinozaki K."/>
            <person name="Davis R.W."/>
            <person name="Theologis A."/>
            <person name="Ecker J.R."/>
        </authorList>
    </citation>
    <scope>NUCLEOTIDE SEQUENCE [LARGE SCALE MRNA]</scope>
    <source>
        <strain>cv. Columbia</strain>
    </source>
</reference>
<reference key="5">
    <citation type="submission" date="2002-03" db="EMBL/GenBank/DDBJ databases">
        <title>Full-length cDNA from Arabidopsis thaliana.</title>
        <authorList>
            <person name="Brover V.V."/>
            <person name="Troukhan M.E."/>
            <person name="Alexandrov N.A."/>
            <person name="Lu Y.-P."/>
            <person name="Flavell R.B."/>
            <person name="Feldmann K.A."/>
        </authorList>
    </citation>
    <scope>NUCLEOTIDE SEQUENCE [LARGE SCALE MRNA]</scope>
</reference>
<keyword id="KW-0472">Membrane</keyword>
<keyword id="KW-1185">Reference proteome</keyword>
<keyword id="KW-0812">Transmembrane</keyword>
<keyword id="KW-1133">Transmembrane helix</keyword>
<evidence type="ECO:0000255" key="1"/>
<evidence type="ECO:0000269" key="2">
    <source>
    </source>
</evidence>
<evidence type="ECO:0000305" key="3"/>
<sequence>MPSNSGDDNVLQVLIKNFDVLALPLVTLVYPLYASVKAIETRSLPEDEQWLTYWVLYALISLFELTFSKPLEWFPIWPYMKLFGICWLVLPQFNGAEHIYKHFIRPFYRDPQRATTKIWYVPHKKFNFFPKRDDDDILTAAEKYMEQHGTEAFERMIVKKDSYERGRSSRGINNHMIFDDDYRY</sequence>
<dbReference type="EMBL" id="AF141661">
    <property type="protein sequence ID" value="AAD31881.1"/>
    <property type="molecule type" value="mRNA"/>
</dbReference>
<dbReference type="EMBL" id="AF141978">
    <property type="protein sequence ID" value="AAD31886.1"/>
    <property type="molecule type" value="Genomic_DNA"/>
</dbReference>
<dbReference type="EMBL" id="AC013289">
    <property type="protein sequence ID" value="AAG52538.1"/>
    <property type="molecule type" value="Genomic_DNA"/>
</dbReference>
<dbReference type="EMBL" id="CP002684">
    <property type="protein sequence ID" value="AEE34964.1"/>
    <property type="molecule type" value="Genomic_DNA"/>
</dbReference>
<dbReference type="EMBL" id="AY065456">
    <property type="protein sequence ID" value="AAL38897.1"/>
    <property type="molecule type" value="mRNA"/>
</dbReference>
<dbReference type="EMBL" id="AY142652">
    <property type="protein sequence ID" value="AAN13190.1"/>
    <property type="molecule type" value="mRNA"/>
</dbReference>
<dbReference type="EMBL" id="AY084473">
    <property type="protein sequence ID" value="AAM61044.1"/>
    <property type="molecule type" value="mRNA"/>
</dbReference>
<dbReference type="PIR" id="H96718">
    <property type="entry name" value="H96718"/>
</dbReference>
<dbReference type="RefSeq" id="NP_177128.1">
    <property type="nucleotide sequence ID" value="NM_105638.4"/>
</dbReference>
<dbReference type="FunCoup" id="Q9S784">
    <property type="interactions" value="483"/>
</dbReference>
<dbReference type="STRING" id="3702.Q9S784"/>
<dbReference type="PaxDb" id="3702-AT1G69700.1"/>
<dbReference type="ProteomicsDB" id="230284"/>
<dbReference type="EnsemblPlants" id="AT1G69700.1">
    <property type="protein sequence ID" value="AT1G69700.1"/>
    <property type="gene ID" value="AT1G69700"/>
</dbReference>
<dbReference type="GeneID" id="843306"/>
<dbReference type="Gramene" id="AT1G69700.1">
    <property type="protein sequence ID" value="AT1G69700.1"/>
    <property type="gene ID" value="AT1G69700"/>
</dbReference>
<dbReference type="KEGG" id="ath:AT1G69700"/>
<dbReference type="Araport" id="AT1G69700"/>
<dbReference type="TAIR" id="AT1G69700">
    <property type="gene designation" value="HVA22C"/>
</dbReference>
<dbReference type="eggNOG" id="KOG1725">
    <property type="taxonomic scope" value="Eukaryota"/>
</dbReference>
<dbReference type="HOGENOM" id="CLU_098452_0_0_1"/>
<dbReference type="InParanoid" id="Q9S784"/>
<dbReference type="OMA" id="EHGTHEF"/>
<dbReference type="PhylomeDB" id="Q9S784"/>
<dbReference type="PRO" id="PR:Q9S784"/>
<dbReference type="Proteomes" id="UP000006548">
    <property type="component" value="Chromosome 1"/>
</dbReference>
<dbReference type="ExpressionAtlas" id="Q9S784">
    <property type="expression patterns" value="baseline and differential"/>
</dbReference>
<dbReference type="GO" id="GO:0016020">
    <property type="term" value="C:membrane"/>
    <property type="evidence" value="ECO:0007669"/>
    <property type="project" value="UniProtKB-SubCell"/>
</dbReference>
<dbReference type="GO" id="GO:0009506">
    <property type="term" value="C:plasmodesma"/>
    <property type="evidence" value="ECO:0007005"/>
    <property type="project" value="TAIR"/>
</dbReference>
<dbReference type="GO" id="GO:0042538">
    <property type="term" value="P:hyperosmotic salinity response"/>
    <property type="evidence" value="ECO:0000270"/>
    <property type="project" value="TAIR"/>
</dbReference>
<dbReference type="GO" id="GO:0009737">
    <property type="term" value="P:response to abscisic acid"/>
    <property type="evidence" value="ECO:0000270"/>
    <property type="project" value="TAIR"/>
</dbReference>
<dbReference type="GO" id="GO:0009414">
    <property type="term" value="P:response to water deprivation"/>
    <property type="evidence" value="ECO:0000270"/>
    <property type="project" value="TAIR"/>
</dbReference>
<dbReference type="InterPro" id="IPR004345">
    <property type="entry name" value="TB2_DP1_HVA22"/>
</dbReference>
<dbReference type="PANTHER" id="PTHR12300:SF157">
    <property type="entry name" value="HVA22-LIKE PROTEIN C"/>
    <property type="match status" value="1"/>
</dbReference>
<dbReference type="PANTHER" id="PTHR12300">
    <property type="entry name" value="HVA22-LIKE PROTEINS"/>
    <property type="match status" value="1"/>
</dbReference>
<dbReference type="Pfam" id="PF03134">
    <property type="entry name" value="TB2_DP1_HVA22"/>
    <property type="match status" value="1"/>
</dbReference>
<organism>
    <name type="scientific">Arabidopsis thaliana</name>
    <name type="common">Mouse-ear cress</name>
    <dbReference type="NCBI Taxonomy" id="3702"/>
    <lineage>
        <taxon>Eukaryota</taxon>
        <taxon>Viridiplantae</taxon>
        <taxon>Streptophyta</taxon>
        <taxon>Embryophyta</taxon>
        <taxon>Tracheophyta</taxon>
        <taxon>Spermatophyta</taxon>
        <taxon>Magnoliopsida</taxon>
        <taxon>eudicotyledons</taxon>
        <taxon>Gunneridae</taxon>
        <taxon>Pentapetalae</taxon>
        <taxon>rosids</taxon>
        <taxon>malvids</taxon>
        <taxon>Brassicales</taxon>
        <taxon>Brassicaceae</taxon>
        <taxon>Camelineae</taxon>
        <taxon>Arabidopsis</taxon>
    </lineage>
</organism>